<dbReference type="EC" id="2.4.99.28" evidence="1"/>
<dbReference type="EMBL" id="CP000076">
    <property type="protein sequence ID" value="AAY95043.1"/>
    <property type="molecule type" value="Genomic_DNA"/>
</dbReference>
<dbReference type="RefSeq" id="WP_011064027.1">
    <property type="nucleotide sequence ID" value="NC_004129.6"/>
</dbReference>
<dbReference type="SMR" id="Q4K4C2"/>
<dbReference type="STRING" id="220664.PFL_5853"/>
<dbReference type="CAZy" id="GT51">
    <property type="family name" value="Glycosyltransferase Family 51"/>
</dbReference>
<dbReference type="GeneID" id="57478808"/>
<dbReference type="KEGG" id="pfl:PFL_5853"/>
<dbReference type="PATRIC" id="fig|220664.5.peg.5967"/>
<dbReference type="eggNOG" id="COG0744">
    <property type="taxonomic scope" value="Bacteria"/>
</dbReference>
<dbReference type="HOGENOM" id="CLU_006354_1_1_6"/>
<dbReference type="UniPathway" id="UPA00219"/>
<dbReference type="Proteomes" id="UP000008540">
    <property type="component" value="Chromosome"/>
</dbReference>
<dbReference type="GO" id="GO:0009274">
    <property type="term" value="C:peptidoglycan-based cell wall"/>
    <property type="evidence" value="ECO:0007669"/>
    <property type="project" value="InterPro"/>
</dbReference>
<dbReference type="GO" id="GO:0005886">
    <property type="term" value="C:plasma membrane"/>
    <property type="evidence" value="ECO:0007669"/>
    <property type="project" value="UniProtKB-SubCell"/>
</dbReference>
<dbReference type="GO" id="GO:0016763">
    <property type="term" value="F:pentosyltransferase activity"/>
    <property type="evidence" value="ECO:0007669"/>
    <property type="project" value="InterPro"/>
</dbReference>
<dbReference type="GO" id="GO:0008955">
    <property type="term" value="F:peptidoglycan glycosyltransferase activity"/>
    <property type="evidence" value="ECO:0007669"/>
    <property type="project" value="UniProtKB-UniRule"/>
</dbReference>
<dbReference type="GO" id="GO:0071555">
    <property type="term" value="P:cell wall organization"/>
    <property type="evidence" value="ECO:0007669"/>
    <property type="project" value="UniProtKB-KW"/>
</dbReference>
<dbReference type="GO" id="GO:0009252">
    <property type="term" value="P:peptidoglycan biosynthetic process"/>
    <property type="evidence" value="ECO:0007669"/>
    <property type="project" value="UniProtKB-UniRule"/>
</dbReference>
<dbReference type="GO" id="GO:0008360">
    <property type="term" value="P:regulation of cell shape"/>
    <property type="evidence" value="ECO:0007669"/>
    <property type="project" value="UniProtKB-KW"/>
</dbReference>
<dbReference type="Gene3D" id="1.10.3810.10">
    <property type="entry name" value="Biosynthetic peptidoglycan transglycosylase-like"/>
    <property type="match status" value="1"/>
</dbReference>
<dbReference type="HAMAP" id="MF_00766">
    <property type="entry name" value="PGT_MtgA"/>
    <property type="match status" value="1"/>
</dbReference>
<dbReference type="InterPro" id="IPR001264">
    <property type="entry name" value="Glyco_trans_51"/>
</dbReference>
<dbReference type="InterPro" id="IPR023346">
    <property type="entry name" value="Lysozyme-like_dom_sf"/>
</dbReference>
<dbReference type="InterPro" id="IPR036950">
    <property type="entry name" value="PBP_transglycosylase"/>
</dbReference>
<dbReference type="InterPro" id="IPR011812">
    <property type="entry name" value="Pep_trsgly"/>
</dbReference>
<dbReference type="NCBIfam" id="TIGR02070">
    <property type="entry name" value="mono_pep_trsgly"/>
    <property type="match status" value="1"/>
</dbReference>
<dbReference type="PANTHER" id="PTHR30400:SF0">
    <property type="entry name" value="BIOSYNTHETIC PEPTIDOGLYCAN TRANSGLYCOSYLASE"/>
    <property type="match status" value="1"/>
</dbReference>
<dbReference type="PANTHER" id="PTHR30400">
    <property type="entry name" value="MONOFUNCTIONAL BIOSYNTHETIC PEPTIDOGLYCAN TRANSGLYCOSYLASE"/>
    <property type="match status" value="1"/>
</dbReference>
<dbReference type="Pfam" id="PF00912">
    <property type="entry name" value="Transgly"/>
    <property type="match status" value="1"/>
</dbReference>
<dbReference type="SUPFAM" id="SSF53955">
    <property type="entry name" value="Lysozyme-like"/>
    <property type="match status" value="1"/>
</dbReference>
<feature type="chain" id="PRO_0000257679" description="Biosynthetic peptidoglycan transglycosylase">
    <location>
        <begin position="1"/>
        <end position="240"/>
    </location>
</feature>
<feature type="transmembrane region" description="Helical" evidence="1">
    <location>
        <begin position="12"/>
        <end position="31"/>
    </location>
</feature>
<protein>
    <recommendedName>
        <fullName evidence="1">Biosynthetic peptidoglycan transglycosylase</fullName>
        <ecNumber evidence="1">2.4.99.28</ecNumber>
    </recommendedName>
    <alternativeName>
        <fullName evidence="1">Glycan polymerase</fullName>
    </alternativeName>
    <alternativeName>
        <fullName evidence="1">Peptidoglycan glycosyltransferase MtgA</fullName>
        <shortName evidence="1">PGT</shortName>
    </alternativeName>
</protein>
<organism>
    <name type="scientific">Pseudomonas fluorescens (strain ATCC BAA-477 / NRRL B-23932 / Pf-5)</name>
    <dbReference type="NCBI Taxonomy" id="220664"/>
    <lineage>
        <taxon>Bacteria</taxon>
        <taxon>Pseudomonadati</taxon>
        <taxon>Pseudomonadota</taxon>
        <taxon>Gammaproteobacteria</taxon>
        <taxon>Pseudomonadales</taxon>
        <taxon>Pseudomonadaceae</taxon>
        <taxon>Pseudomonas</taxon>
    </lineage>
</organism>
<sequence>MLRYLFRRLVKALMWFMVGSVLLVLLLRFVPPPGTALMVERKIESWVDNDPIDLQRTWKPWDEISDNLKVAVIAGEDQKFPEHWGFDIDAIQAALIHNERGGSIRGASTLSQQVSKNLFLWSGRSYLRKGLEAWFTALIEVFWPKQRILEVYLNSVEWDEGVFGAEAAARHHFGVSAANLSRQQASLLAAVLPNPRVWSAARPSTYVMQRAGWVRRQMSQLGGADYLNRLNESRRAPWAE</sequence>
<gene>
    <name evidence="1" type="primary">mtgA</name>
    <name type="ordered locus">PFL_5853</name>
</gene>
<proteinExistence type="inferred from homology"/>
<evidence type="ECO:0000255" key="1">
    <source>
        <dbReference type="HAMAP-Rule" id="MF_00766"/>
    </source>
</evidence>
<accession>Q4K4C2</accession>
<keyword id="KW-0997">Cell inner membrane</keyword>
<keyword id="KW-1003">Cell membrane</keyword>
<keyword id="KW-0133">Cell shape</keyword>
<keyword id="KW-0961">Cell wall biogenesis/degradation</keyword>
<keyword id="KW-0328">Glycosyltransferase</keyword>
<keyword id="KW-0472">Membrane</keyword>
<keyword id="KW-0573">Peptidoglycan synthesis</keyword>
<keyword id="KW-0808">Transferase</keyword>
<keyword id="KW-0812">Transmembrane</keyword>
<keyword id="KW-1133">Transmembrane helix</keyword>
<name>MTGA_PSEF5</name>
<comment type="function">
    <text evidence="1">Peptidoglycan polymerase that catalyzes glycan chain elongation from lipid-linked precursors.</text>
</comment>
<comment type="catalytic activity">
    <reaction evidence="1">
        <text>[GlcNAc-(1-&gt;4)-Mur2Ac(oyl-L-Ala-gamma-D-Glu-L-Lys-D-Ala-D-Ala)](n)-di-trans,octa-cis-undecaprenyl diphosphate + beta-D-GlcNAc-(1-&gt;4)-Mur2Ac(oyl-L-Ala-gamma-D-Glu-L-Lys-D-Ala-D-Ala)-di-trans,octa-cis-undecaprenyl diphosphate = [GlcNAc-(1-&gt;4)-Mur2Ac(oyl-L-Ala-gamma-D-Glu-L-Lys-D-Ala-D-Ala)](n+1)-di-trans,octa-cis-undecaprenyl diphosphate + di-trans,octa-cis-undecaprenyl diphosphate + H(+)</text>
        <dbReference type="Rhea" id="RHEA:23708"/>
        <dbReference type="Rhea" id="RHEA-COMP:9602"/>
        <dbReference type="Rhea" id="RHEA-COMP:9603"/>
        <dbReference type="ChEBI" id="CHEBI:15378"/>
        <dbReference type="ChEBI" id="CHEBI:58405"/>
        <dbReference type="ChEBI" id="CHEBI:60033"/>
        <dbReference type="ChEBI" id="CHEBI:78435"/>
        <dbReference type="EC" id="2.4.99.28"/>
    </reaction>
</comment>
<comment type="pathway">
    <text evidence="1">Cell wall biogenesis; peptidoglycan biosynthesis.</text>
</comment>
<comment type="subcellular location">
    <subcellularLocation>
        <location evidence="1">Cell inner membrane</location>
        <topology evidence="1">Single-pass membrane protein</topology>
    </subcellularLocation>
</comment>
<comment type="similarity">
    <text evidence="1">Belongs to the glycosyltransferase 51 family.</text>
</comment>
<reference key="1">
    <citation type="journal article" date="2005" name="Nat. Biotechnol.">
        <title>Complete genome sequence of the plant commensal Pseudomonas fluorescens Pf-5.</title>
        <authorList>
            <person name="Paulsen I.T."/>
            <person name="Press C.M."/>
            <person name="Ravel J."/>
            <person name="Kobayashi D.Y."/>
            <person name="Myers G.S.A."/>
            <person name="Mavrodi D.V."/>
            <person name="DeBoy R.T."/>
            <person name="Seshadri R."/>
            <person name="Ren Q."/>
            <person name="Madupu R."/>
            <person name="Dodson R.J."/>
            <person name="Durkin A.S."/>
            <person name="Brinkac L.M."/>
            <person name="Daugherty S.C."/>
            <person name="Sullivan S.A."/>
            <person name="Rosovitz M.J."/>
            <person name="Gwinn M.L."/>
            <person name="Zhou L."/>
            <person name="Schneider D.J."/>
            <person name="Cartinhour S.W."/>
            <person name="Nelson W.C."/>
            <person name="Weidman J."/>
            <person name="Watkins K."/>
            <person name="Tran K."/>
            <person name="Khouri H."/>
            <person name="Pierson E.A."/>
            <person name="Pierson L.S. III"/>
            <person name="Thomashow L.S."/>
            <person name="Loper J.E."/>
        </authorList>
    </citation>
    <scope>NUCLEOTIDE SEQUENCE [LARGE SCALE GENOMIC DNA]</scope>
    <source>
        <strain>ATCC BAA-477 / NRRL B-23932 / Pf-5</strain>
    </source>
</reference>